<gene>
    <name evidence="1" type="primary">hutI</name>
    <name type="ordered locus">SAV_3493</name>
</gene>
<evidence type="ECO:0000255" key="1">
    <source>
        <dbReference type="HAMAP-Rule" id="MF_00372"/>
    </source>
</evidence>
<sequence length="414" mass="43341">MSSTVTTAHTAGTGSTVITNIAGLVTNSPSFGRGSPRSSKFESGGASPLGLIQDAAVVIDGDRVAWIGESSKAPATDNRVDAGGRAVIPGFVDSHSHLVFAGDRTQEFNARMSGRSYTAGGIRTTVAATRAASDADLEANLTRYLDEALRQGTTTFETKSGYGLTVEDEARALRIASAHTDEVTYLGAHIVPPDYADDPAAYVALVTGEMLDACAPHARWIDVFCEKGAFDGDQARAILTAGRAKGLHPRVHANQLSYGPGVQLAVELDAASADHCTHLTDADVDALASGRTVATLLPGAEFSTRAEWPNARRLLDAGATVALSTDCNPGSSFTSSVPFCIALAVRDMGMTPDEALWSATAGGAAALRREDIGHLTPGAYADLAFLDAPSHVHLAYRPGVPLVSEVWRRGRRVR</sequence>
<keyword id="KW-0963">Cytoplasm</keyword>
<keyword id="KW-0369">Histidine metabolism</keyword>
<keyword id="KW-0378">Hydrolase</keyword>
<keyword id="KW-0408">Iron</keyword>
<keyword id="KW-0479">Metal-binding</keyword>
<keyword id="KW-1185">Reference proteome</keyword>
<keyword id="KW-0862">Zinc</keyword>
<name>HUTI_STRAW</name>
<reference key="1">
    <citation type="journal article" date="2003" name="Nat. Biotechnol.">
        <title>Complete genome sequence and comparative analysis of the industrial microorganism Streptomyces avermitilis.</title>
        <authorList>
            <person name="Ikeda H."/>
            <person name="Ishikawa J."/>
            <person name="Hanamoto A."/>
            <person name="Shinose M."/>
            <person name="Kikuchi H."/>
            <person name="Shiba T."/>
            <person name="Sakaki Y."/>
            <person name="Hattori M."/>
            <person name="Omura S."/>
        </authorList>
    </citation>
    <scope>NUCLEOTIDE SEQUENCE [LARGE SCALE GENOMIC DNA]</scope>
    <source>
        <strain>ATCC 31267 / DSM 46492 / JCM 5070 / NBRC 14893 / NCIMB 12804 / NRRL 8165 / MA-4680</strain>
    </source>
</reference>
<reference key="2">
    <citation type="journal article" date="2001" name="Proc. Natl. Acad. Sci. U.S.A.">
        <title>Genome sequence of an industrial microorganism Streptomyces avermitilis: deducing the ability of producing secondary metabolites.</title>
        <authorList>
            <person name="Omura S."/>
            <person name="Ikeda H."/>
            <person name="Ishikawa J."/>
            <person name="Hanamoto A."/>
            <person name="Takahashi C."/>
            <person name="Shinose M."/>
            <person name="Takahashi Y."/>
            <person name="Horikawa H."/>
            <person name="Nakazawa H."/>
            <person name="Osonoe T."/>
            <person name="Kikuchi H."/>
            <person name="Shiba T."/>
            <person name="Sakaki Y."/>
            <person name="Hattori M."/>
        </authorList>
    </citation>
    <scope>NUCLEOTIDE SEQUENCE [LARGE SCALE GENOMIC DNA]</scope>
    <source>
        <strain>ATCC 31267 / DSM 46492 / JCM 5070 / NBRC 14893 / NCIMB 12804 / NRRL 8165 / MA-4680</strain>
    </source>
</reference>
<protein>
    <recommendedName>
        <fullName evidence="1">Imidazolonepropionase</fullName>
        <ecNumber evidence="1">3.5.2.7</ecNumber>
    </recommendedName>
    <alternativeName>
        <fullName evidence="1">Imidazolone-5-propionate hydrolase</fullName>
    </alternativeName>
</protein>
<proteinExistence type="inferred from homology"/>
<accession>Q82HL5</accession>
<organism>
    <name type="scientific">Streptomyces avermitilis (strain ATCC 31267 / DSM 46492 / JCM 5070 / NBRC 14893 / NCIMB 12804 / NRRL 8165 / MA-4680)</name>
    <dbReference type="NCBI Taxonomy" id="227882"/>
    <lineage>
        <taxon>Bacteria</taxon>
        <taxon>Bacillati</taxon>
        <taxon>Actinomycetota</taxon>
        <taxon>Actinomycetes</taxon>
        <taxon>Kitasatosporales</taxon>
        <taxon>Streptomycetaceae</taxon>
        <taxon>Streptomyces</taxon>
    </lineage>
</organism>
<comment type="function">
    <text evidence="1">Catalyzes the hydrolytic cleavage of the carbon-nitrogen bond in imidazolone-5-propanoate to yield N-formimidoyl-L-glutamate. It is the third step in the universal histidine degradation pathway.</text>
</comment>
<comment type="catalytic activity">
    <reaction evidence="1">
        <text>4-imidazolone-5-propanoate + H2O = N-formimidoyl-L-glutamate</text>
        <dbReference type="Rhea" id="RHEA:23660"/>
        <dbReference type="ChEBI" id="CHEBI:15377"/>
        <dbReference type="ChEBI" id="CHEBI:58928"/>
        <dbReference type="ChEBI" id="CHEBI:77893"/>
        <dbReference type="EC" id="3.5.2.7"/>
    </reaction>
</comment>
<comment type="cofactor">
    <cofactor evidence="1">
        <name>Zn(2+)</name>
        <dbReference type="ChEBI" id="CHEBI:29105"/>
    </cofactor>
    <cofactor evidence="1">
        <name>Fe(3+)</name>
        <dbReference type="ChEBI" id="CHEBI:29034"/>
    </cofactor>
    <text evidence="1">Binds 1 zinc or iron ion per subunit.</text>
</comment>
<comment type="pathway">
    <text evidence="1">Amino-acid degradation; L-histidine degradation into L-glutamate; N-formimidoyl-L-glutamate from L-histidine: step 3/3.</text>
</comment>
<comment type="subcellular location">
    <subcellularLocation>
        <location evidence="1">Cytoplasm</location>
    </subcellularLocation>
</comment>
<comment type="similarity">
    <text evidence="1">Belongs to the metallo-dependent hydrolases superfamily. HutI family.</text>
</comment>
<dbReference type="EC" id="3.5.2.7" evidence="1"/>
<dbReference type="EMBL" id="BA000030">
    <property type="protein sequence ID" value="BAC71205.1"/>
    <property type="molecule type" value="Genomic_DNA"/>
</dbReference>
<dbReference type="SMR" id="Q82HL5"/>
<dbReference type="KEGG" id="sma:SAVERM_3493"/>
<dbReference type="eggNOG" id="COG1228">
    <property type="taxonomic scope" value="Bacteria"/>
</dbReference>
<dbReference type="HOGENOM" id="CLU_041647_1_0_11"/>
<dbReference type="OrthoDB" id="9776455at2"/>
<dbReference type="UniPathway" id="UPA00379">
    <property type="reaction ID" value="UER00551"/>
</dbReference>
<dbReference type="Proteomes" id="UP000000428">
    <property type="component" value="Chromosome"/>
</dbReference>
<dbReference type="GO" id="GO:0005737">
    <property type="term" value="C:cytoplasm"/>
    <property type="evidence" value="ECO:0007669"/>
    <property type="project" value="UniProtKB-SubCell"/>
</dbReference>
<dbReference type="GO" id="GO:0050480">
    <property type="term" value="F:imidazolonepropionase activity"/>
    <property type="evidence" value="ECO:0007669"/>
    <property type="project" value="UniProtKB-UniRule"/>
</dbReference>
<dbReference type="GO" id="GO:0005506">
    <property type="term" value="F:iron ion binding"/>
    <property type="evidence" value="ECO:0007669"/>
    <property type="project" value="UniProtKB-UniRule"/>
</dbReference>
<dbReference type="GO" id="GO:0008270">
    <property type="term" value="F:zinc ion binding"/>
    <property type="evidence" value="ECO:0007669"/>
    <property type="project" value="UniProtKB-UniRule"/>
</dbReference>
<dbReference type="GO" id="GO:0019556">
    <property type="term" value="P:L-histidine catabolic process to glutamate and formamide"/>
    <property type="evidence" value="ECO:0007669"/>
    <property type="project" value="UniProtKB-UniPathway"/>
</dbReference>
<dbReference type="GO" id="GO:0019557">
    <property type="term" value="P:L-histidine catabolic process to glutamate and formate"/>
    <property type="evidence" value="ECO:0007669"/>
    <property type="project" value="UniProtKB-UniPathway"/>
</dbReference>
<dbReference type="CDD" id="cd01296">
    <property type="entry name" value="Imidazolone-5PH"/>
    <property type="match status" value="1"/>
</dbReference>
<dbReference type="FunFam" id="3.20.20.140:FF:000007">
    <property type="entry name" value="Imidazolonepropionase"/>
    <property type="match status" value="1"/>
</dbReference>
<dbReference type="Gene3D" id="3.20.20.140">
    <property type="entry name" value="Metal-dependent hydrolases"/>
    <property type="match status" value="1"/>
</dbReference>
<dbReference type="Gene3D" id="2.30.40.10">
    <property type="entry name" value="Urease, subunit C, domain 1"/>
    <property type="match status" value="1"/>
</dbReference>
<dbReference type="HAMAP" id="MF_00372">
    <property type="entry name" value="HutI"/>
    <property type="match status" value="1"/>
</dbReference>
<dbReference type="InterPro" id="IPR006680">
    <property type="entry name" value="Amidohydro-rel"/>
</dbReference>
<dbReference type="InterPro" id="IPR005920">
    <property type="entry name" value="HutI"/>
</dbReference>
<dbReference type="InterPro" id="IPR011059">
    <property type="entry name" value="Metal-dep_hydrolase_composite"/>
</dbReference>
<dbReference type="InterPro" id="IPR032466">
    <property type="entry name" value="Metal_Hydrolase"/>
</dbReference>
<dbReference type="NCBIfam" id="TIGR01224">
    <property type="entry name" value="hutI"/>
    <property type="match status" value="1"/>
</dbReference>
<dbReference type="PANTHER" id="PTHR42752">
    <property type="entry name" value="IMIDAZOLONEPROPIONASE"/>
    <property type="match status" value="1"/>
</dbReference>
<dbReference type="PANTHER" id="PTHR42752:SF1">
    <property type="entry name" value="IMIDAZOLONEPROPIONASE-RELATED"/>
    <property type="match status" value="1"/>
</dbReference>
<dbReference type="Pfam" id="PF01979">
    <property type="entry name" value="Amidohydro_1"/>
    <property type="match status" value="1"/>
</dbReference>
<dbReference type="SUPFAM" id="SSF51338">
    <property type="entry name" value="Composite domain of metallo-dependent hydrolases"/>
    <property type="match status" value="2"/>
</dbReference>
<dbReference type="SUPFAM" id="SSF51556">
    <property type="entry name" value="Metallo-dependent hydrolases"/>
    <property type="match status" value="1"/>
</dbReference>
<feature type="chain" id="PRO_0000306529" description="Imidazolonepropionase">
    <location>
        <begin position="1"/>
        <end position="414"/>
    </location>
</feature>
<feature type="binding site" evidence="1">
    <location>
        <position position="95"/>
    </location>
    <ligand>
        <name>Fe(3+)</name>
        <dbReference type="ChEBI" id="CHEBI:29034"/>
    </ligand>
</feature>
<feature type="binding site" evidence="1">
    <location>
        <position position="95"/>
    </location>
    <ligand>
        <name>Zn(2+)</name>
        <dbReference type="ChEBI" id="CHEBI:29105"/>
    </ligand>
</feature>
<feature type="binding site" evidence="1">
    <location>
        <position position="97"/>
    </location>
    <ligand>
        <name>Fe(3+)</name>
        <dbReference type="ChEBI" id="CHEBI:29034"/>
    </ligand>
</feature>
<feature type="binding site" evidence="1">
    <location>
        <position position="97"/>
    </location>
    <ligand>
        <name>Zn(2+)</name>
        <dbReference type="ChEBI" id="CHEBI:29105"/>
    </ligand>
</feature>
<feature type="binding site" evidence="1">
    <location>
        <position position="104"/>
    </location>
    <ligand>
        <name>4-imidazolone-5-propanoate</name>
        <dbReference type="ChEBI" id="CHEBI:77893"/>
    </ligand>
</feature>
<feature type="binding site" evidence="1">
    <location>
        <position position="162"/>
    </location>
    <ligand>
        <name>4-imidazolone-5-propanoate</name>
        <dbReference type="ChEBI" id="CHEBI:77893"/>
    </ligand>
</feature>
<feature type="binding site" evidence="1">
    <location>
        <position position="162"/>
    </location>
    <ligand>
        <name>N-formimidoyl-L-glutamate</name>
        <dbReference type="ChEBI" id="CHEBI:58928"/>
    </ligand>
</feature>
<feature type="binding site" evidence="1">
    <location>
        <position position="189"/>
    </location>
    <ligand>
        <name>4-imidazolone-5-propanoate</name>
        <dbReference type="ChEBI" id="CHEBI:77893"/>
    </ligand>
</feature>
<feature type="binding site" evidence="1">
    <location>
        <position position="252"/>
    </location>
    <ligand>
        <name>Fe(3+)</name>
        <dbReference type="ChEBI" id="CHEBI:29034"/>
    </ligand>
</feature>
<feature type="binding site" evidence="1">
    <location>
        <position position="252"/>
    </location>
    <ligand>
        <name>Zn(2+)</name>
        <dbReference type="ChEBI" id="CHEBI:29105"/>
    </ligand>
</feature>
<feature type="binding site" evidence="1">
    <location>
        <position position="255"/>
    </location>
    <ligand>
        <name>4-imidazolone-5-propanoate</name>
        <dbReference type="ChEBI" id="CHEBI:77893"/>
    </ligand>
</feature>
<feature type="binding site" evidence="1">
    <location>
        <position position="326"/>
    </location>
    <ligand>
        <name>Fe(3+)</name>
        <dbReference type="ChEBI" id="CHEBI:29034"/>
    </ligand>
</feature>
<feature type="binding site" evidence="1">
    <location>
        <position position="326"/>
    </location>
    <ligand>
        <name>Zn(2+)</name>
        <dbReference type="ChEBI" id="CHEBI:29105"/>
    </ligand>
</feature>
<feature type="binding site" evidence="1">
    <location>
        <position position="328"/>
    </location>
    <ligand>
        <name>N-formimidoyl-L-glutamate</name>
        <dbReference type="ChEBI" id="CHEBI:58928"/>
    </ligand>
</feature>
<feature type="binding site" evidence="1">
    <location>
        <position position="330"/>
    </location>
    <ligand>
        <name>N-formimidoyl-L-glutamate</name>
        <dbReference type="ChEBI" id="CHEBI:58928"/>
    </ligand>
</feature>
<feature type="binding site" evidence="1">
    <location>
        <position position="331"/>
    </location>
    <ligand>
        <name>4-imidazolone-5-propanoate</name>
        <dbReference type="ChEBI" id="CHEBI:77893"/>
    </ligand>
</feature>